<keyword id="KW-0130">Cell adhesion</keyword>
<keyword id="KW-1003">Cell membrane</keyword>
<keyword id="KW-1015">Disulfide bond</keyword>
<keyword id="KW-0325">Glycoprotein</keyword>
<keyword id="KW-0375">Hydrogen ion transport</keyword>
<keyword id="KW-0406">Ion transport</keyword>
<keyword id="KW-0472">Membrane</keyword>
<keyword id="KW-0630">Potassium</keyword>
<keyword id="KW-0633">Potassium transport</keyword>
<keyword id="KW-1267">Proteomics identification</keyword>
<keyword id="KW-1185">Reference proteome</keyword>
<keyword id="KW-0735">Signal-anchor</keyword>
<keyword id="KW-0812">Transmembrane</keyword>
<keyword id="KW-1133">Transmembrane helix</keyword>
<keyword id="KW-0813">Transport</keyword>
<name>ATP4B_HUMAN</name>
<evidence type="ECO:0000250" key="1">
    <source>
        <dbReference type="UniProtKB" id="P18434"/>
    </source>
</evidence>
<evidence type="ECO:0000250" key="2">
    <source>
        <dbReference type="UniProtKB" id="P18597"/>
    </source>
</evidence>
<evidence type="ECO:0000250" key="3">
    <source>
        <dbReference type="UniProtKB" id="P19156"/>
    </source>
</evidence>
<evidence type="ECO:0000250" key="4">
    <source>
        <dbReference type="UniProtKB" id="P20648"/>
    </source>
</evidence>
<evidence type="ECO:0000255" key="5"/>
<evidence type="ECO:0000269" key="6">
    <source>
    </source>
</evidence>
<evidence type="ECO:0000305" key="7"/>
<evidence type="ECO:0000312" key="8">
    <source>
        <dbReference type="HGNC" id="HGNC:820"/>
    </source>
</evidence>
<comment type="function">
    <text evidence="2 3">The beta subunit of the gastric H(+)/K(+) ATPase pump which transports H(+) ions in exchange for K(+) ions across the apical membrane of parietal cells. Plays a structural and regulatory role in the assembly and membrane targeting of a functionally active pump (By similarity). Within a transport cycle, the transfer of a H(+) ion across the membrane is coupled to ATP hydrolysis and is associated with a transient phosphorylation of the alpha subunit that shifts the pump conformation from inward-facing (E1) to outward-facing state (E2). Interacts with the phosphorylation domain of the alpha subunit and functions as a ratchet, stabilizing the lumenal-open E2 conformation and preventing the reverse reaction of the transport cycle (By similarity).</text>
</comment>
<comment type="subunit">
    <text evidence="1 2">The ATPase pump is composed of two subunits: alpha (catalytic) and beta (regulatory). Interacts with alpha subunit ATP12A; this interaction is required for the formation of a functionally active pump and targeting at the plasma membrane (By similarity). Interacts (via N-terminus) with alpha subunit ATP4A (via the P-domain) (By similarity).</text>
</comment>
<comment type="interaction">
    <interactant intactId="EBI-3904463">
        <id>P51164</id>
    </interactant>
    <interactant intactId="EBI-748961">
        <id>O95273</id>
        <label>CCNDBP1</label>
    </interactant>
    <organismsDiffer>false</organismsDiffer>
    <experiments>3</experiments>
</comment>
<comment type="interaction">
    <interactant intactId="EBI-3904463">
        <id>P51164</id>
    </interactant>
    <interactant intactId="EBI-18076404">
        <id>O15529</id>
        <label>GPR42</label>
    </interactant>
    <organismsDiffer>false</organismsDiffer>
    <experiments>3</experiments>
</comment>
<comment type="interaction">
    <interactant intactId="EBI-3904463">
        <id>P51164</id>
    </interactant>
    <interactant intactId="EBI-747993">
        <id>Q9NQZ6</id>
        <label>ZC4H2</label>
    </interactant>
    <organismsDiffer>false</organismsDiffer>
    <experiments>3</experiments>
</comment>
<comment type="subcellular location">
    <subcellularLocation>
        <location evidence="4">Apical cell membrane</location>
        <topology evidence="5">Single-pass type II membrane protein</topology>
    </subcellularLocation>
    <subcellularLocation>
        <location evidence="2">Cell membrane</location>
        <topology evidence="5">Single-pass type II membrane protein</topology>
    </subcellularLocation>
    <text evidence="4">Localized in the apical canalicular membrane of parietal cells.</text>
</comment>
<comment type="domain">
    <text evidence="6">The C-terminal lobe folds into an immunoglobulin-like domain and mediates cell adhesion properties.</text>
</comment>
<comment type="PTM">
    <text evidence="2">N-glycosylation is necessary for assembly and functional expression of the pump at the plasma membrane.</text>
</comment>
<comment type="similarity">
    <text evidence="7">Belongs to the X(+)/potassium ATPases subunit beta family.</text>
</comment>
<sequence length="291" mass="33367">MAALQEKKTCGQRMEEFQRYCWNPDTGQMLGRTLSRWVWISLYYVAFYVVMTGLFALCLYVLMQTVDPYTPDYQDQLRSPGVTLRPDVYGEKGLEIVYNVSDNRTWADLTQTLHAFLAGYSPAAQEDSINCTSEQYFFQESFRAPNHTKFSCKFTADMLQNCSGLADPNFGFEEGKPCFIIKMNRIVKFLPSNGSAPRVDCAFLDQPRELGQPLQVKYYPPNGTFSLHYFPYYGKKAQPHYSNPLVAAKLLNIPRNAEVAIVCKVMAEHVTFNNPHDPYEGKVEFKLKIEK</sequence>
<proteinExistence type="evidence at protein level"/>
<reference key="1">
    <citation type="journal article" date="1991" name="Biochem. Biophys. Res. Commun.">
        <title>cDNA cloning of the beta-subunit of the human gastric H,K-ATPase.</title>
        <authorList>
            <person name="Ma J.-Y."/>
            <person name="Song Y.-H."/>
            <person name="Sjoestrand S.E."/>
            <person name="Rask L."/>
            <person name="Maardh S."/>
        </authorList>
    </citation>
    <scope>NUCLEOTIDE SEQUENCE [MRNA]</scope>
</reference>
<reference key="2">
    <citation type="journal article" date="2004" name="Nature">
        <title>The DNA sequence and analysis of human chromosome 13.</title>
        <authorList>
            <person name="Dunham A."/>
            <person name="Matthews L.H."/>
            <person name="Burton J."/>
            <person name="Ashurst J.L."/>
            <person name="Howe K.L."/>
            <person name="Ashcroft K.J."/>
            <person name="Beare D.M."/>
            <person name="Burford D.C."/>
            <person name="Hunt S.E."/>
            <person name="Griffiths-Jones S."/>
            <person name="Jones M.C."/>
            <person name="Keenan S.J."/>
            <person name="Oliver K."/>
            <person name="Scott C.E."/>
            <person name="Ainscough R."/>
            <person name="Almeida J.P."/>
            <person name="Ambrose K.D."/>
            <person name="Andrews D.T."/>
            <person name="Ashwell R.I.S."/>
            <person name="Babbage A.K."/>
            <person name="Bagguley C.L."/>
            <person name="Bailey J."/>
            <person name="Bannerjee R."/>
            <person name="Barlow K.F."/>
            <person name="Bates K."/>
            <person name="Beasley H."/>
            <person name="Bird C.P."/>
            <person name="Bray-Allen S."/>
            <person name="Brown A.J."/>
            <person name="Brown J.Y."/>
            <person name="Burrill W."/>
            <person name="Carder C."/>
            <person name="Carter N.P."/>
            <person name="Chapman J.C."/>
            <person name="Clamp M.E."/>
            <person name="Clark S.Y."/>
            <person name="Clarke G."/>
            <person name="Clee C.M."/>
            <person name="Clegg S.C."/>
            <person name="Cobley V."/>
            <person name="Collins J.E."/>
            <person name="Corby N."/>
            <person name="Coville G.J."/>
            <person name="Deloukas P."/>
            <person name="Dhami P."/>
            <person name="Dunham I."/>
            <person name="Dunn M."/>
            <person name="Earthrowl M.E."/>
            <person name="Ellington A.G."/>
            <person name="Faulkner L."/>
            <person name="Frankish A.G."/>
            <person name="Frankland J."/>
            <person name="French L."/>
            <person name="Garner P."/>
            <person name="Garnett J."/>
            <person name="Gilbert J.G.R."/>
            <person name="Gilson C.J."/>
            <person name="Ghori J."/>
            <person name="Grafham D.V."/>
            <person name="Gribble S.M."/>
            <person name="Griffiths C."/>
            <person name="Hall R.E."/>
            <person name="Hammond S."/>
            <person name="Harley J.L."/>
            <person name="Hart E.A."/>
            <person name="Heath P.D."/>
            <person name="Howden P.J."/>
            <person name="Huckle E.J."/>
            <person name="Hunt P.J."/>
            <person name="Hunt A.R."/>
            <person name="Johnson C."/>
            <person name="Johnson D."/>
            <person name="Kay M."/>
            <person name="Kimberley A.M."/>
            <person name="King A."/>
            <person name="Laird G.K."/>
            <person name="Langford C.J."/>
            <person name="Lawlor S."/>
            <person name="Leongamornlert D.A."/>
            <person name="Lloyd D.M."/>
            <person name="Lloyd C."/>
            <person name="Loveland J.E."/>
            <person name="Lovell J."/>
            <person name="Martin S."/>
            <person name="Mashreghi-Mohammadi M."/>
            <person name="McLaren S.J."/>
            <person name="McMurray A."/>
            <person name="Milne S."/>
            <person name="Moore M.J.F."/>
            <person name="Nickerson T."/>
            <person name="Palmer S.A."/>
            <person name="Pearce A.V."/>
            <person name="Peck A.I."/>
            <person name="Pelan S."/>
            <person name="Phillimore B."/>
            <person name="Porter K.M."/>
            <person name="Rice C.M."/>
            <person name="Searle S."/>
            <person name="Sehra H.K."/>
            <person name="Shownkeen R."/>
            <person name="Skuce C.D."/>
            <person name="Smith M."/>
            <person name="Steward C.A."/>
            <person name="Sycamore N."/>
            <person name="Tester J."/>
            <person name="Thomas D.W."/>
            <person name="Tracey A."/>
            <person name="Tromans A."/>
            <person name="Tubby B."/>
            <person name="Wall M."/>
            <person name="Wallis J.M."/>
            <person name="West A.P."/>
            <person name="Whitehead S.L."/>
            <person name="Willey D.L."/>
            <person name="Wilming L."/>
            <person name="Wray P.W."/>
            <person name="Wright M.W."/>
            <person name="Young L."/>
            <person name="Coulson A."/>
            <person name="Durbin R.M."/>
            <person name="Hubbard T."/>
            <person name="Sulston J.E."/>
            <person name="Beck S."/>
            <person name="Bentley D.R."/>
            <person name="Rogers J."/>
            <person name="Ross M.T."/>
        </authorList>
    </citation>
    <scope>NUCLEOTIDE SEQUENCE [LARGE SCALE GENOMIC DNA]</scope>
</reference>
<reference key="3">
    <citation type="submission" date="2005-07" db="EMBL/GenBank/DDBJ databases">
        <authorList>
            <person name="Mural R.J."/>
            <person name="Istrail S."/>
            <person name="Sutton G.G."/>
            <person name="Florea L."/>
            <person name="Halpern A.L."/>
            <person name="Mobarry C.M."/>
            <person name="Lippert R."/>
            <person name="Walenz B."/>
            <person name="Shatkay H."/>
            <person name="Dew I."/>
            <person name="Miller J.R."/>
            <person name="Flanigan M.J."/>
            <person name="Edwards N.J."/>
            <person name="Bolanos R."/>
            <person name="Fasulo D."/>
            <person name="Halldorsson B.V."/>
            <person name="Hannenhalli S."/>
            <person name="Turner R."/>
            <person name="Yooseph S."/>
            <person name="Lu F."/>
            <person name="Nusskern D.R."/>
            <person name="Shue B.C."/>
            <person name="Zheng X.H."/>
            <person name="Zhong F."/>
            <person name="Delcher A.L."/>
            <person name="Huson D.H."/>
            <person name="Kravitz S.A."/>
            <person name="Mouchard L."/>
            <person name="Reinert K."/>
            <person name="Remington K.A."/>
            <person name="Clark A.G."/>
            <person name="Waterman M.S."/>
            <person name="Eichler E.E."/>
            <person name="Adams M.D."/>
            <person name="Hunkapiller M.W."/>
            <person name="Myers E.W."/>
            <person name="Venter J.C."/>
        </authorList>
    </citation>
    <scope>NUCLEOTIDE SEQUENCE [LARGE SCALE GENOMIC DNA]</scope>
</reference>
<reference key="4">
    <citation type="journal article" date="2004" name="Genome Res.">
        <title>The status, quality, and expansion of the NIH full-length cDNA project: the Mammalian Gene Collection (MGC).</title>
        <authorList>
            <consortium name="The MGC Project Team"/>
        </authorList>
    </citation>
    <scope>NUCLEOTIDE SEQUENCE [LARGE SCALE MRNA]</scope>
    <source>
        <tissue>Colon</tissue>
    </source>
</reference>
<reference key="5">
    <citation type="journal article" date="1997" name="FEBS Lett.">
        <title>GATA-6 DNA binding protein expressed in human gastric adenocarcinoma MKN45 cells.</title>
        <authorList>
            <person name="Yoshida T."/>
            <person name="Sato R."/>
            <person name="Mahmood S."/>
            <person name="Kawasaki S."/>
            <person name="Futai M."/>
            <person name="Maeda M."/>
        </authorList>
    </citation>
    <scope>NUCLEOTIDE SEQUENCE [GENOMIC DNA] OF 1-14</scope>
    <source>
        <tissue>Liver</tissue>
    </source>
</reference>
<reference key="6">
    <citation type="journal article" date="2009" name="Biochemistry">
        <title>A C-terminal lobe of the beta subunit of Na,K-ATPase and H,K-ATPase resembles cell adhesion molecules.</title>
        <authorList>
            <person name="Bab-Dinitz E."/>
            <person name="Albeck S."/>
            <person name="Peleg Y."/>
            <person name="Brumfeld V."/>
            <person name="Gottschalk K.E."/>
            <person name="Karlish S.J."/>
        </authorList>
    </citation>
    <scope>FUNCTION</scope>
    <scope>DOMAIN IMMUNOGLOBULIN-LIKE</scope>
</reference>
<feature type="chain" id="PRO_0000219091" description="Potassium-transporting ATPase subunit beta">
    <location>
        <begin position="1"/>
        <end position="291"/>
    </location>
</feature>
<feature type="topological domain" description="Cytoplasmic" evidence="5">
    <location>
        <begin position="1"/>
        <end position="36"/>
    </location>
</feature>
<feature type="transmembrane region" description="Helical; Signal-anchor for type II membrane protein" evidence="5">
    <location>
        <begin position="37"/>
        <end position="57"/>
    </location>
</feature>
<feature type="topological domain" description="Extracellular" evidence="5">
    <location>
        <begin position="58"/>
        <end position="291"/>
    </location>
</feature>
<feature type="region of interest" description="immunoglobulin-like">
    <location>
        <begin position="194"/>
        <end position="291"/>
    </location>
</feature>
<feature type="glycosylation site" description="N-linked (GlcNAc...) asparagine" evidence="2">
    <location>
        <position position="99"/>
    </location>
</feature>
<feature type="glycosylation site" description="N-linked (GlcNAc...) asparagine" evidence="2">
    <location>
        <position position="103"/>
    </location>
</feature>
<feature type="glycosylation site" description="N-linked (GlcNAc...) asparagine" evidence="2">
    <location>
        <position position="130"/>
    </location>
</feature>
<feature type="glycosylation site" description="N-linked (GlcNAc...) asparagine" evidence="2">
    <location>
        <position position="146"/>
    </location>
</feature>
<feature type="glycosylation site" description="N-linked (GlcNAc...) asparagine" evidence="2">
    <location>
        <position position="161"/>
    </location>
</feature>
<feature type="glycosylation site" description="N-linked (GlcNAc...) asparagine" evidence="2">
    <location>
        <position position="193"/>
    </location>
</feature>
<feature type="glycosylation site" description="N-linked (GlcNAc...) asparagine" evidence="2">
    <location>
        <position position="222"/>
    </location>
</feature>
<feature type="disulfide bond" evidence="1">
    <location>
        <begin position="131"/>
        <end position="152"/>
    </location>
</feature>
<feature type="disulfide bond" evidence="1">
    <location>
        <begin position="162"/>
        <end position="178"/>
    </location>
</feature>
<feature type="disulfide bond" evidence="1">
    <location>
        <begin position="201"/>
        <end position="263"/>
    </location>
</feature>
<protein>
    <recommendedName>
        <fullName>Potassium-transporting ATPase subunit beta</fullName>
    </recommendedName>
    <alternativeName>
        <fullName>Gastric H(+)/K(+) ATPase subunit beta</fullName>
    </alternativeName>
    <alternativeName>
        <fullName>Proton pump beta chain</fullName>
    </alternativeName>
</protein>
<accession>P51164</accession>
<accession>B1B0N8</accession>
<dbReference type="EMBL" id="M75110">
    <property type="protein sequence ID" value="AAA35987.1"/>
    <property type="molecule type" value="mRNA"/>
</dbReference>
<dbReference type="EMBL" id="BX537316">
    <property type="status" value="NOT_ANNOTATED_CDS"/>
    <property type="molecule type" value="Genomic_DNA"/>
</dbReference>
<dbReference type="EMBL" id="CH471085">
    <property type="protein sequence ID" value="EAX09221.1"/>
    <property type="molecule type" value="Genomic_DNA"/>
</dbReference>
<dbReference type="EMBL" id="BC029059">
    <property type="protein sequence ID" value="AAH29059.1"/>
    <property type="molecule type" value="mRNA"/>
</dbReference>
<dbReference type="EMBL" id="AB008783">
    <property type="protein sequence ID" value="BAA23425.1"/>
    <property type="molecule type" value="Genomic_DNA"/>
</dbReference>
<dbReference type="CCDS" id="CCDS9539.1"/>
<dbReference type="PIR" id="JH0480">
    <property type="entry name" value="JH0480"/>
</dbReference>
<dbReference type="RefSeq" id="NP_000696.1">
    <property type="nucleotide sequence ID" value="NM_000705.4"/>
</dbReference>
<dbReference type="SMR" id="P51164"/>
<dbReference type="BioGRID" id="106986">
    <property type="interactions" value="7"/>
</dbReference>
<dbReference type="ComplexPortal" id="CPX-2160">
    <property type="entry name" value="Hydrogen:potassium-exchanging ATPase complex"/>
</dbReference>
<dbReference type="CORUM" id="P51164"/>
<dbReference type="FunCoup" id="P51164">
    <property type="interactions" value="159"/>
</dbReference>
<dbReference type="IntAct" id="P51164">
    <property type="interactions" value="6"/>
</dbReference>
<dbReference type="STRING" id="9606.ENSP00000334216"/>
<dbReference type="BindingDB" id="P51164"/>
<dbReference type="ChEMBL" id="CHEMBL2095173"/>
<dbReference type="DrugBank" id="DB05351">
    <property type="generic name" value="Dexlansoprazole"/>
</dbReference>
<dbReference type="DrugBank" id="DB00736">
    <property type="generic name" value="Esomeprazole"/>
</dbReference>
<dbReference type="DrugBank" id="DB00338">
    <property type="generic name" value="Omeprazole"/>
</dbReference>
<dbReference type="DrugBank" id="DB00213">
    <property type="generic name" value="Pantoprazole"/>
</dbReference>
<dbReference type="DrugBank" id="DB13620">
    <property type="generic name" value="Potassium gluconate"/>
</dbReference>
<dbReference type="DrugBank" id="DB17856">
    <property type="generic name" value="Soraprazan"/>
</dbReference>
<dbReference type="DrugBank" id="DB11739">
    <property type="generic name" value="Vonoprazan"/>
</dbReference>
<dbReference type="DrugCentral" id="P51164"/>
<dbReference type="TCDB" id="3.A.3.1.2">
    <property type="family name" value="the p-type atpase (p-atpase) superfamily"/>
</dbReference>
<dbReference type="GlyCosmos" id="P51164">
    <property type="glycosylation" value="7 sites, No reported glycans"/>
</dbReference>
<dbReference type="GlyGen" id="P51164">
    <property type="glycosylation" value="7 sites"/>
</dbReference>
<dbReference type="iPTMnet" id="P51164"/>
<dbReference type="PhosphoSitePlus" id="P51164"/>
<dbReference type="BioMuta" id="ATP4B"/>
<dbReference type="DMDM" id="1703461"/>
<dbReference type="jPOST" id="P51164"/>
<dbReference type="MassIVE" id="P51164"/>
<dbReference type="PaxDb" id="9606-ENSP00000334216"/>
<dbReference type="PeptideAtlas" id="P51164"/>
<dbReference type="ProteomicsDB" id="56294"/>
<dbReference type="Antibodypedia" id="25980">
    <property type="antibodies" value="266 antibodies from 30 providers"/>
</dbReference>
<dbReference type="DNASU" id="496"/>
<dbReference type="Ensembl" id="ENST00000335288.5">
    <property type="protein sequence ID" value="ENSP00000334216.3"/>
    <property type="gene ID" value="ENSG00000186009.5"/>
</dbReference>
<dbReference type="GeneID" id="496"/>
<dbReference type="KEGG" id="hsa:496"/>
<dbReference type="MANE-Select" id="ENST00000335288.5">
    <property type="protein sequence ID" value="ENSP00000334216.3"/>
    <property type="RefSeq nucleotide sequence ID" value="NM_000705.4"/>
    <property type="RefSeq protein sequence ID" value="NP_000696.1"/>
</dbReference>
<dbReference type="UCSC" id="uc001vtz.5">
    <property type="organism name" value="human"/>
</dbReference>
<dbReference type="AGR" id="HGNC:820"/>
<dbReference type="CTD" id="496"/>
<dbReference type="DisGeNET" id="496"/>
<dbReference type="GeneCards" id="ATP4B"/>
<dbReference type="HGNC" id="HGNC:820">
    <property type="gene designation" value="ATP4B"/>
</dbReference>
<dbReference type="HPA" id="ENSG00000186009">
    <property type="expression patterns" value="Tissue enriched (stomach)"/>
</dbReference>
<dbReference type="MIM" id="137217">
    <property type="type" value="gene"/>
</dbReference>
<dbReference type="neXtProt" id="NX_P51164"/>
<dbReference type="OpenTargets" id="ENSG00000186009"/>
<dbReference type="PharmGKB" id="PA25114"/>
<dbReference type="VEuPathDB" id="HostDB:ENSG00000186009"/>
<dbReference type="eggNOG" id="KOG3927">
    <property type="taxonomic scope" value="Eukaryota"/>
</dbReference>
<dbReference type="GeneTree" id="ENSGT01030000234579"/>
<dbReference type="HOGENOM" id="CLU_057702_1_1_1"/>
<dbReference type="InParanoid" id="P51164"/>
<dbReference type="OMA" id="APRVNCT"/>
<dbReference type="OrthoDB" id="5912413at2759"/>
<dbReference type="PAN-GO" id="P51164">
    <property type="GO annotations" value="6 GO annotations based on evolutionary models"/>
</dbReference>
<dbReference type="PhylomeDB" id="P51164"/>
<dbReference type="TreeFam" id="TF314618"/>
<dbReference type="BioCyc" id="MetaCyc:G66-33511-MONOMER"/>
<dbReference type="PathwayCommons" id="P51164"/>
<dbReference type="Reactome" id="R-HSA-936837">
    <property type="pathway name" value="Ion transport by P-type ATPases"/>
</dbReference>
<dbReference type="SignaLink" id="P51164"/>
<dbReference type="BioGRID-ORCS" id="496">
    <property type="hits" value="6 hits in 1139 CRISPR screens"/>
</dbReference>
<dbReference type="GenomeRNAi" id="496"/>
<dbReference type="Pharos" id="P51164">
    <property type="development level" value="Tclin"/>
</dbReference>
<dbReference type="PRO" id="PR:P51164"/>
<dbReference type="Proteomes" id="UP000005640">
    <property type="component" value="Chromosome 13"/>
</dbReference>
<dbReference type="RNAct" id="P51164">
    <property type="molecule type" value="protein"/>
</dbReference>
<dbReference type="Bgee" id="ENSG00000186009">
    <property type="expression patterns" value="Expressed in body of stomach and 68 other cell types or tissues"/>
</dbReference>
<dbReference type="GO" id="GO:0016324">
    <property type="term" value="C:apical plasma membrane"/>
    <property type="evidence" value="ECO:0007669"/>
    <property type="project" value="UniProtKB-SubCell"/>
</dbReference>
<dbReference type="GO" id="GO:0005886">
    <property type="term" value="C:plasma membrane"/>
    <property type="evidence" value="ECO:0000304"/>
    <property type="project" value="Reactome"/>
</dbReference>
<dbReference type="GO" id="GO:0005889">
    <property type="term" value="C:potassium:proton exchanging ATPase complex"/>
    <property type="evidence" value="ECO:0000266"/>
    <property type="project" value="ComplexPortal"/>
</dbReference>
<dbReference type="GO" id="GO:0005890">
    <property type="term" value="C:sodium:potassium-exchanging ATPase complex"/>
    <property type="evidence" value="ECO:0000318"/>
    <property type="project" value="GO_Central"/>
</dbReference>
<dbReference type="GO" id="GO:0001671">
    <property type="term" value="F:ATPase activator activity"/>
    <property type="evidence" value="ECO:0000318"/>
    <property type="project" value="GO_Central"/>
</dbReference>
<dbReference type="GO" id="GO:1901363">
    <property type="term" value="F:heterocyclic compound binding"/>
    <property type="evidence" value="ECO:0007669"/>
    <property type="project" value="Ensembl"/>
</dbReference>
<dbReference type="GO" id="GO:0008900">
    <property type="term" value="F:P-type potassium:proton transporter activity"/>
    <property type="evidence" value="ECO:0000304"/>
    <property type="project" value="ProtInc"/>
</dbReference>
<dbReference type="GO" id="GO:0007155">
    <property type="term" value="P:cell adhesion"/>
    <property type="evidence" value="ECO:0007669"/>
    <property type="project" value="UniProtKB-KW"/>
</dbReference>
<dbReference type="GO" id="GO:0030007">
    <property type="term" value="P:intracellular potassium ion homeostasis"/>
    <property type="evidence" value="ECO:0000318"/>
    <property type="project" value="GO_Central"/>
</dbReference>
<dbReference type="GO" id="GO:0006883">
    <property type="term" value="P:intracellular sodium ion homeostasis"/>
    <property type="evidence" value="ECO:0000318"/>
    <property type="project" value="GO_Central"/>
</dbReference>
<dbReference type="GO" id="GO:0045851">
    <property type="term" value="P:pH reduction"/>
    <property type="evidence" value="ECO:0007669"/>
    <property type="project" value="Ensembl"/>
</dbReference>
<dbReference type="GO" id="GO:1990573">
    <property type="term" value="P:potassium ion import across plasma membrane"/>
    <property type="evidence" value="ECO:0000318"/>
    <property type="project" value="GO_Central"/>
</dbReference>
<dbReference type="GO" id="GO:0071805">
    <property type="term" value="P:potassium ion transmembrane transport"/>
    <property type="evidence" value="ECO:0000266"/>
    <property type="project" value="ComplexPortal"/>
</dbReference>
<dbReference type="GO" id="GO:0032496">
    <property type="term" value="P:response to lipopolysaccharide"/>
    <property type="evidence" value="ECO:0007669"/>
    <property type="project" value="Ensembl"/>
</dbReference>
<dbReference type="GO" id="GO:0036376">
    <property type="term" value="P:sodium ion export across plasma membrane"/>
    <property type="evidence" value="ECO:0000318"/>
    <property type="project" value="GO_Central"/>
</dbReference>
<dbReference type="FunFam" id="1.20.5.170:FF:000061">
    <property type="entry name" value="Sodium/potassium-transporting ATPase subunit beta"/>
    <property type="match status" value="1"/>
</dbReference>
<dbReference type="FunFam" id="2.60.40.1660:FF:000006">
    <property type="entry name" value="Sodium/potassium-transporting ATPase subunit beta"/>
    <property type="match status" value="1"/>
</dbReference>
<dbReference type="Gene3D" id="1.20.5.170">
    <property type="match status" value="1"/>
</dbReference>
<dbReference type="Gene3D" id="2.60.40.1660">
    <property type="entry name" value="Na, k-atpase alpha subunit"/>
    <property type="match status" value="1"/>
</dbReference>
<dbReference type="InterPro" id="IPR000402">
    <property type="entry name" value="Na/K_ATPase_sub_beta"/>
</dbReference>
<dbReference type="InterPro" id="IPR038702">
    <property type="entry name" value="Na/K_ATPase_sub_beta_sf"/>
</dbReference>
<dbReference type="NCBIfam" id="TIGR01107">
    <property type="entry name" value="Na_K_ATPase_bet"/>
    <property type="match status" value="1"/>
</dbReference>
<dbReference type="PANTHER" id="PTHR11523:SF11">
    <property type="entry name" value="POTASSIUM-TRANSPORTING ATPASE SUBUNIT BETA"/>
    <property type="match status" value="1"/>
</dbReference>
<dbReference type="PANTHER" id="PTHR11523">
    <property type="entry name" value="SODIUM/POTASSIUM-DEPENDENT ATPASE BETA SUBUNIT"/>
    <property type="match status" value="1"/>
</dbReference>
<dbReference type="Pfam" id="PF00287">
    <property type="entry name" value="Na_K-ATPase"/>
    <property type="match status" value="1"/>
</dbReference>
<dbReference type="PROSITE" id="PS00390">
    <property type="entry name" value="ATPASE_NA_K_BETA_1"/>
    <property type="match status" value="1"/>
</dbReference>
<dbReference type="PROSITE" id="PS00391">
    <property type="entry name" value="ATPASE_NA_K_BETA_2"/>
    <property type="match status" value="1"/>
</dbReference>
<gene>
    <name evidence="8" type="primary">ATP4B</name>
</gene>
<organism>
    <name type="scientific">Homo sapiens</name>
    <name type="common">Human</name>
    <dbReference type="NCBI Taxonomy" id="9606"/>
    <lineage>
        <taxon>Eukaryota</taxon>
        <taxon>Metazoa</taxon>
        <taxon>Chordata</taxon>
        <taxon>Craniata</taxon>
        <taxon>Vertebrata</taxon>
        <taxon>Euteleostomi</taxon>
        <taxon>Mammalia</taxon>
        <taxon>Eutheria</taxon>
        <taxon>Euarchontoglires</taxon>
        <taxon>Primates</taxon>
        <taxon>Haplorrhini</taxon>
        <taxon>Catarrhini</taxon>
        <taxon>Hominidae</taxon>
        <taxon>Homo</taxon>
    </lineage>
</organism>